<sequence length="491" mass="55635">MKYKNLRDFLELLEKQGELKRITQEIDPYLEMTEIADRTLRAGGPALLFENPKGYEIPVLCNLFGTPKRVALGMGQEDVTALRDVGRLLAFLKEPEQPKSFKDLWSTLPQFKQVLNMPTKVLSKAECQQIVFSDAEVDLYKLPIMHCWKDDVAPLVTWGLTITKGPSKKRQNLGIYRQQLIGKNKLIMRWLSHRGGALDFQEWKEARPNQPFPISVALGADPATILGAVTPVPDTLSEYAFAGLLRGNKTEVVKSISNDLEIPASAEIILEGYIDPTETALEGPYGDHTGYYNEQEYFPVFTVTHLTMRKDPIYHSTYTGRPPDEPAVLGEALNEVFIPILQKQFPEIVDFYLPPEGCSYRLAVVTIKKQYAGHAKRVMMGVWSFLRQFMYTKFVIVCDDDINARDWKDVIWAITTRSDPARDCTIIENTPIDYLDFASPIAGLGSKMGIDATNKWIGETQREWGTPIKKAPNVVKRIDDIWESLNIFAPK</sequence>
<keyword id="KW-1003">Cell membrane</keyword>
<keyword id="KW-0210">Decarboxylase</keyword>
<keyword id="KW-0285">Flavoprotein</keyword>
<keyword id="KW-0288">FMN</keyword>
<keyword id="KW-0456">Lyase</keyword>
<keyword id="KW-0464">Manganese</keyword>
<keyword id="KW-0472">Membrane</keyword>
<keyword id="KW-0479">Metal-binding</keyword>
<keyword id="KW-0831">Ubiquinone biosynthesis</keyword>
<gene>
    <name evidence="1" type="primary">ubiD</name>
    <name type="ordered locus">HS_0474</name>
</gene>
<name>UBID_HISS1</name>
<dbReference type="EC" id="4.1.1.98" evidence="1"/>
<dbReference type="EMBL" id="CP000436">
    <property type="protein sequence ID" value="ABI24751.1"/>
    <property type="molecule type" value="Genomic_DNA"/>
</dbReference>
<dbReference type="SMR" id="Q0I278"/>
<dbReference type="KEGG" id="hso:HS_0474"/>
<dbReference type="eggNOG" id="COG0043">
    <property type="taxonomic scope" value="Bacteria"/>
</dbReference>
<dbReference type="HOGENOM" id="CLU_023348_4_1_6"/>
<dbReference type="UniPathway" id="UPA00232"/>
<dbReference type="GO" id="GO:0005829">
    <property type="term" value="C:cytosol"/>
    <property type="evidence" value="ECO:0007669"/>
    <property type="project" value="TreeGrafter"/>
</dbReference>
<dbReference type="GO" id="GO:0005886">
    <property type="term" value="C:plasma membrane"/>
    <property type="evidence" value="ECO:0007669"/>
    <property type="project" value="UniProtKB-SubCell"/>
</dbReference>
<dbReference type="GO" id="GO:0008694">
    <property type="term" value="F:3-octaprenyl-4-hydroxybenzoate carboxy-lyase activity"/>
    <property type="evidence" value="ECO:0007669"/>
    <property type="project" value="UniProtKB-UniRule"/>
</dbReference>
<dbReference type="GO" id="GO:0046872">
    <property type="term" value="F:metal ion binding"/>
    <property type="evidence" value="ECO:0007669"/>
    <property type="project" value="UniProtKB-KW"/>
</dbReference>
<dbReference type="GO" id="GO:0006744">
    <property type="term" value="P:ubiquinone biosynthetic process"/>
    <property type="evidence" value="ECO:0007669"/>
    <property type="project" value="UniProtKB-UniRule"/>
</dbReference>
<dbReference type="FunFam" id="3.40.1670.10:FF:000001">
    <property type="entry name" value="3-octaprenyl-4-hydroxybenzoate carboxy-lyase"/>
    <property type="match status" value="1"/>
</dbReference>
<dbReference type="Gene3D" id="1.20.5.570">
    <property type="entry name" value="Single helix bin"/>
    <property type="match status" value="1"/>
</dbReference>
<dbReference type="Gene3D" id="3.40.1670.10">
    <property type="entry name" value="UbiD C-terminal domain-like"/>
    <property type="match status" value="1"/>
</dbReference>
<dbReference type="HAMAP" id="MF_01636">
    <property type="entry name" value="UbiD"/>
    <property type="match status" value="1"/>
</dbReference>
<dbReference type="InterPro" id="IPR002830">
    <property type="entry name" value="UbiD"/>
</dbReference>
<dbReference type="InterPro" id="IPR049381">
    <property type="entry name" value="UbiD-like_C"/>
</dbReference>
<dbReference type="InterPro" id="IPR049383">
    <property type="entry name" value="UbiD-like_N"/>
</dbReference>
<dbReference type="InterPro" id="IPR023677">
    <property type="entry name" value="UbiD_bacteria"/>
</dbReference>
<dbReference type="InterPro" id="IPR048304">
    <property type="entry name" value="UbiD_Rift_dom"/>
</dbReference>
<dbReference type="NCBIfam" id="NF008175">
    <property type="entry name" value="PRK10922.1"/>
    <property type="match status" value="1"/>
</dbReference>
<dbReference type="NCBIfam" id="TIGR00148">
    <property type="entry name" value="UbiD family decarboxylase"/>
    <property type="match status" value="1"/>
</dbReference>
<dbReference type="PANTHER" id="PTHR30108">
    <property type="entry name" value="3-OCTAPRENYL-4-HYDROXYBENZOATE CARBOXY-LYASE-RELATED"/>
    <property type="match status" value="1"/>
</dbReference>
<dbReference type="PANTHER" id="PTHR30108:SF17">
    <property type="entry name" value="FERULIC ACID DECARBOXYLASE 1"/>
    <property type="match status" value="1"/>
</dbReference>
<dbReference type="Pfam" id="PF01977">
    <property type="entry name" value="UbiD"/>
    <property type="match status" value="1"/>
</dbReference>
<dbReference type="Pfam" id="PF20696">
    <property type="entry name" value="UbiD_C"/>
    <property type="match status" value="1"/>
</dbReference>
<dbReference type="Pfam" id="PF20695">
    <property type="entry name" value="UbiD_N"/>
    <property type="match status" value="1"/>
</dbReference>
<dbReference type="SUPFAM" id="SSF50475">
    <property type="entry name" value="FMN-binding split barrel"/>
    <property type="match status" value="1"/>
</dbReference>
<dbReference type="SUPFAM" id="SSF143968">
    <property type="entry name" value="UbiD C-terminal domain-like"/>
    <property type="match status" value="1"/>
</dbReference>
<accession>Q0I278</accession>
<reference key="1">
    <citation type="journal article" date="2007" name="J. Bacteriol.">
        <title>Complete genome sequence of Haemophilus somnus (Histophilus somni) strain 129Pt and comparison to Haemophilus ducreyi 35000HP and Haemophilus influenzae Rd.</title>
        <authorList>
            <person name="Challacombe J.F."/>
            <person name="Duncan A.J."/>
            <person name="Brettin T.S."/>
            <person name="Bruce D."/>
            <person name="Chertkov O."/>
            <person name="Detter J.C."/>
            <person name="Han C.S."/>
            <person name="Misra M."/>
            <person name="Richardson P."/>
            <person name="Tapia R."/>
            <person name="Thayer N."/>
            <person name="Xie G."/>
            <person name="Inzana T.J."/>
        </authorList>
    </citation>
    <scope>NUCLEOTIDE SEQUENCE [LARGE SCALE GENOMIC DNA]</scope>
    <source>
        <strain>129Pt</strain>
    </source>
</reference>
<organism>
    <name type="scientific">Histophilus somni (strain 129Pt)</name>
    <name type="common">Haemophilus somnus</name>
    <dbReference type="NCBI Taxonomy" id="205914"/>
    <lineage>
        <taxon>Bacteria</taxon>
        <taxon>Pseudomonadati</taxon>
        <taxon>Pseudomonadota</taxon>
        <taxon>Gammaproteobacteria</taxon>
        <taxon>Pasteurellales</taxon>
        <taxon>Pasteurellaceae</taxon>
        <taxon>Histophilus</taxon>
    </lineage>
</organism>
<protein>
    <recommendedName>
        <fullName evidence="1">3-octaprenyl-4-hydroxybenzoate carboxy-lyase</fullName>
        <ecNumber evidence="1">4.1.1.98</ecNumber>
    </recommendedName>
    <alternativeName>
        <fullName evidence="1">Polyprenyl p-hydroxybenzoate decarboxylase</fullName>
    </alternativeName>
</protein>
<comment type="function">
    <text evidence="1">Catalyzes the decarboxylation of 3-octaprenyl-4-hydroxy benzoate to 2-octaprenylphenol, an intermediate step in ubiquinone biosynthesis.</text>
</comment>
<comment type="catalytic activity">
    <reaction evidence="1">
        <text>a 4-hydroxy-3-(all-trans-polyprenyl)benzoate + H(+) = a 2-(all-trans-polyprenyl)phenol + CO2</text>
        <dbReference type="Rhea" id="RHEA:41680"/>
        <dbReference type="Rhea" id="RHEA-COMP:9514"/>
        <dbReference type="Rhea" id="RHEA-COMP:9516"/>
        <dbReference type="ChEBI" id="CHEBI:1269"/>
        <dbReference type="ChEBI" id="CHEBI:15378"/>
        <dbReference type="ChEBI" id="CHEBI:16526"/>
        <dbReference type="ChEBI" id="CHEBI:78396"/>
        <dbReference type="EC" id="4.1.1.98"/>
    </reaction>
</comment>
<comment type="cofactor">
    <cofactor evidence="1">
        <name>prenylated FMN</name>
        <dbReference type="ChEBI" id="CHEBI:87746"/>
    </cofactor>
    <text evidence="1">Binds 1 prenylated FMN per subunit.</text>
</comment>
<comment type="cofactor">
    <cofactor evidence="1">
        <name>Mn(2+)</name>
        <dbReference type="ChEBI" id="CHEBI:29035"/>
    </cofactor>
</comment>
<comment type="pathway">
    <text evidence="1">Cofactor biosynthesis; ubiquinone biosynthesis.</text>
</comment>
<comment type="subunit">
    <text evidence="1">Homohexamer.</text>
</comment>
<comment type="subcellular location">
    <subcellularLocation>
        <location evidence="1">Cell membrane</location>
        <topology evidence="1">Peripheral membrane protein</topology>
    </subcellularLocation>
</comment>
<comment type="similarity">
    <text evidence="1">Belongs to the UbiD family.</text>
</comment>
<feature type="chain" id="PRO_0000267666" description="3-octaprenyl-4-hydroxybenzoate carboxy-lyase">
    <location>
        <begin position="1"/>
        <end position="491"/>
    </location>
</feature>
<feature type="active site" description="Proton donor" evidence="1">
    <location>
        <position position="287"/>
    </location>
</feature>
<feature type="binding site" evidence="1">
    <location>
        <position position="172"/>
    </location>
    <ligand>
        <name>Mn(2+)</name>
        <dbReference type="ChEBI" id="CHEBI:29035"/>
    </ligand>
</feature>
<feature type="binding site" evidence="1">
    <location>
        <begin position="175"/>
        <end position="177"/>
    </location>
    <ligand>
        <name>prenylated FMN</name>
        <dbReference type="ChEBI" id="CHEBI:87746"/>
    </ligand>
</feature>
<feature type="binding site" evidence="1">
    <location>
        <begin position="189"/>
        <end position="191"/>
    </location>
    <ligand>
        <name>prenylated FMN</name>
        <dbReference type="ChEBI" id="CHEBI:87746"/>
    </ligand>
</feature>
<feature type="binding site" evidence="1">
    <location>
        <begin position="194"/>
        <end position="195"/>
    </location>
    <ligand>
        <name>prenylated FMN</name>
        <dbReference type="ChEBI" id="CHEBI:87746"/>
    </ligand>
</feature>
<feature type="binding site" evidence="1">
    <location>
        <position position="238"/>
    </location>
    <ligand>
        <name>Mn(2+)</name>
        <dbReference type="ChEBI" id="CHEBI:29035"/>
    </ligand>
</feature>
<evidence type="ECO:0000255" key="1">
    <source>
        <dbReference type="HAMAP-Rule" id="MF_01636"/>
    </source>
</evidence>
<proteinExistence type="inferred from homology"/>